<organism>
    <name type="scientific">Streptococcus pyogenes serotype M12 (strain MGAS9429)</name>
    <dbReference type="NCBI Taxonomy" id="370551"/>
    <lineage>
        <taxon>Bacteria</taxon>
        <taxon>Bacillati</taxon>
        <taxon>Bacillota</taxon>
        <taxon>Bacilli</taxon>
        <taxon>Lactobacillales</taxon>
        <taxon>Streptococcaceae</taxon>
        <taxon>Streptococcus</taxon>
    </lineage>
</organism>
<protein>
    <recommendedName>
        <fullName evidence="1">Bifunctional protein GlmU</fullName>
    </recommendedName>
    <domain>
        <recommendedName>
            <fullName evidence="1">UDP-N-acetylglucosamine pyrophosphorylase</fullName>
            <ecNumber evidence="1">2.7.7.23</ecNumber>
        </recommendedName>
        <alternativeName>
            <fullName evidence="1">N-acetylglucosamine-1-phosphate uridyltransferase</fullName>
        </alternativeName>
    </domain>
    <domain>
        <recommendedName>
            <fullName evidence="1">Glucosamine-1-phosphate N-acetyltransferase</fullName>
            <ecNumber evidence="1">2.3.1.157</ecNumber>
        </recommendedName>
    </domain>
</protein>
<proteinExistence type="inferred from homology"/>
<comment type="function">
    <text evidence="1">Catalyzes the last two sequential reactions in the de novo biosynthetic pathway for UDP-N-acetylglucosamine (UDP-GlcNAc). The C-terminal domain catalyzes the transfer of acetyl group from acetyl coenzyme A to glucosamine-1-phosphate (GlcN-1-P) to produce N-acetylglucosamine-1-phosphate (GlcNAc-1-P), which is converted into UDP-GlcNAc by the transfer of uridine 5-monophosphate (from uridine 5-triphosphate), a reaction catalyzed by the N-terminal domain.</text>
</comment>
<comment type="catalytic activity">
    <reaction evidence="1">
        <text>alpha-D-glucosamine 1-phosphate + acetyl-CoA = N-acetyl-alpha-D-glucosamine 1-phosphate + CoA + H(+)</text>
        <dbReference type="Rhea" id="RHEA:13725"/>
        <dbReference type="ChEBI" id="CHEBI:15378"/>
        <dbReference type="ChEBI" id="CHEBI:57287"/>
        <dbReference type="ChEBI" id="CHEBI:57288"/>
        <dbReference type="ChEBI" id="CHEBI:57776"/>
        <dbReference type="ChEBI" id="CHEBI:58516"/>
        <dbReference type="EC" id="2.3.1.157"/>
    </reaction>
</comment>
<comment type="catalytic activity">
    <reaction evidence="1">
        <text>N-acetyl-alpha-D-glucosamine 1-phosphate + UTP + H(+) = UDP-N-acetyl-alpha-D-glucosamine + diphosphate</text>
        <dbReference type="Rhea" id="RHEA:13509"/>
        <dbReference type="ChEBI" id="CHEBI:15378"/>
        <dbReference type="ChEBI" id="CHEBI:33019"/>
        <dbReference type="ChEBI" id="CHEBI:46398"/>
        <dbReference type="ChEBI" id="CHEBI:57705"/>
        <dbReference type="ChEBI" id="CHEBI:57776"/>
        <dbReference type="EC" id="2.7.7.23"/>
    </reaction>
</comment>
<comment type="cofactor">
    <cofactor evidence="1">
        <name>Mg(2+)</name>
        <dbReference type="ChEBI" id="CHEBI:18420"/>
    </cofactor>
    <text evidence="1">Binds 1 Mg(2+) ion per subunit.</text>
</comment>
<comment type="pathway">
    <text evidence="1">Nucleotide-sugar biosynthesis; UDP-N-acetyl-alpha-D-glucosamine biosynthesis; N-acetyl-alpha-D-glucosamine 1-phosphate from alpha-D-glucosamine 6-phosphate (route II): step 2/2.</text>
</comment>
<comment type="pathway">
    <text evidence="1">Nucleotide-sugar biosynthesis; UDP-N-acetyl-alpha-D-glucosamine biosynthesis; UDP-N-acetyl-alpha-D-glucosamine from N-acetyl-alpha-D-glucosamine 1-phosphate: step 1/1.</text>
</comment>
<comment type="pathway">
    <text evidence="1">Bacterial outer membrane biogenesis; LPS lipid A biosynthesis.</text>
</comment>
<comment type="subunit">
    <text evidence="1">Homotrimer.</text>
</comment>
<comment type="subcellular location">
    <subcellularLocation>
        <location evidence="1">Cytoplasm</location>
    </subcellularLocation>
</comment>
<comment type="similarity">
    <text evidence="1">In the N-terminal section; belongs to the N-acetylglucosamine-1-phosphate uridyltransferase family.</text>
</comment>
<comment type="similarity">
    <text evidence="1">In the C-terminal section; belongs to the transferase hexapeptide repeat family.</text>
</comment>
<keyword id="KW-0012">Acyltransferase</keyword>
<keyword id="KW-0133">Cell shape</keyword>
<keyword id="KW-0961">Cell wall biogenesis/degradation</keyword>
<keyword id="KW-0963">Cytoplasm</keyword>
<keyword id="KW-0460">Magnesium</keyword>
<keyword id="KW-0479">Metal-binding</keyword>
<keyword id="KW-0511">Multifunctional enzyme</keyword>
<keyword id="KW-0548">Nucleotidyltransferase</keyword>
<keyword id="KW-0573">Peptidoglycan synthesis</keyword>
<keyword id="KW-0677">Repeat</keyword>
<keyword id="KW-0808">Transferase</keyword>
<name>GLMU_STRPC</name>
<sequence length="460" mass="49531">MTNYAIILAAGKGTRMTSDLPKVLHKVSGLTMLEHVFRSVKAISPEKAVTVIGHKSEKVRAVLADQSAFVHQTEQLGTGHAVMMAETQLEGLEGHTLVIAGDTPLITGESLKSLIDFHVNHKNVATILTATAQDPFGYGRIVRNKDGEVIKIVEQKDANEYEQQLKEINTGTYVFDNKRLFEALKCITTNNAQGEYYLTDVVAIFRANKEKVGAYILRDFNESLGVNDRVALATAETVMRQRITQKHMVNGVTFQNPETVYIESDVEIAPDVLIEGNVTLKGRTHIGSGTVLTNGTYIVDSEIGQGSIITNSMIESSVLAAGVTVGPYAHLRPGTTLGREVHIGNFVEVKGSHIGEKTKAGHLTYIGNAQVGSSVNVGAGTITVNYDGQNKYETVIGDHAFIGSNSTLIAPLEVGDNALTAAGSTISKTVPADSIVIGRSRQVTKEGYAKRLAHHPSRSK</sequence>
<evidence type="ECO:0000255" key="1">
    <source>
        <dbReference type="HAMAP-Rule" id="MF_01631"/>
    </source>
</evidence>
<gene>
    <name evidence="1" type="primary">glmU</name>
    <name type="ordered locus">MGAS9429_Spy0365</name>
</gene>
<accession>Q1JN46</accession>
<reference key="1">
    <citation type="journal article" date="2006" name="Proc. Natl. Acad. Sci. U.S.A.">
        <title>Molecular genetic anatomy of inter- and intraserotype variation in the human bacterial pathogen group A Streptococcus.</title>
        <authorList>
            <person name="Beres S.B."/>
            <person name="Richter E.W."/>
            <person name="Nagiec M.J."/>
            <person name="Sumby P."/>
            <person name="Porcella S.F."/>
            <person name="DeLeo F.R."/>
            <person name="Musser J.M."/>
        </authorList>
    </citation>
    <scope>NUCLEOTIDE SEQUENCE [LARGE SCALE GENOMIC DNA]</scope>
    <source>
        <strain>MGAS9429</strain>
    </source>
</reference>
<feature type="chain" id="PRO_0000263161" description="Bifunctional protein GlmU">
    <location>
        <begin position="1"/>
        <end position="460"/>
    </location>
</feature>
<feature type="region of interest" description="Pyrophosphorylase" evidence="1">
    <location>
        <begin position="1"/>
        <end position="229"/>
    </location>
</feature>
<feature type="region of interest" description="Linker" evidence="1">
    <location>
        <begin position="230"/>
        <end position="250"/>
    </location>
</feature>
<feature type="region of interest" description="N-acetyltransferase" evidence="1">
    <location>
        <begin position="251"/>
        <end position="460"/>
    </location>
</feature>
<feature type="active site" description="Proton acceptor" evidence="1">
    <location>
        <position position="362"/>
    </location>
</feature>
<feature type="binding site" evidence="1">
    <location>
        <begin position="8"/>
        <end position="11"/>
    </location>
    <ligand>
        <name>UDP-N-acetyl-alpha-D-glucosamine</name>
        <dbReference type="ChEBI" id="CHEBI:57705"/>
    </ligand>
</feature>
<feature type="binding site" evidence="1">
    <location>
        <position position="22"/>
    </location>
    <ligand>
        <name>UDP-N-acetyl-alpha-D-glucosamine</name>
        <dbReference type="ChEBI" id="CHEBI:57705"/>
    </ligand>
</feature>
<feature type="binding site" evidence="1">
    <location>
        <position position="72"/>
    </location>
    <ligand>
        <name>UDP-N-acetyl-alpha-D-glucosamine</name>
        <dbReference type="ChEBI" id="CHEBI:57705"/>
    </ligand>
</feature>
<feature type="binding site" evidence="1">
    <location>
        <begin position="77"/>
        <end position="78"/>
    </location>
    <ligand>
        <name>UDP-N-acetyl-alpha-D-glucosamine</name>
        <dbReference type="ChEBI" id="CHEBI:57705"/>
    </ligand>
</feature>
<feature type="binding site" evidence="1">
    <location>
        <position position="102"/>
    </location>
    <ligand>
        <name>Mg(2+)</name>
        <dbReference type="ChEBI" id="CHEBI:18420"/>
    </ligand>
</feature>
<feature type="binding site" evidence="1">
    <location>
        <position position="139"/>
    </location>
    <ligand>
        <name>UDP-N-acetyl-alpha-D-glucosamine</name>
        <dbReference type="ChEBI" id="CHEBI:57705"/>
    </ligand>
</feature>
<feature type="binding site" evidence="1">
    <location>
        <position position="154"/>
    </location>
    <ligand>
        <name>UDP-N-acetyl-alpha-D-glucosamine</name>
        <dbReference type="ChEBI" id="CHEBI:57705"/>
    </ligand>
</feature>
<feature type="binding site" evidence="1">
    <location>
        <position position="169"/>
    </location>
    <ligand>
        <name>UDP-N-acetyl-alpha-D-glucosamine</name>
        <dbReference type="ChEBI" id="CHEBI:57705"/>
    </ligand>
</feature>
<feature type="binding site" evidence="1">
    <location>
        <position position="227"/>
    </location>
    <ligand>
        <name>Mg(2+)</name>
        <dbReference type="ChEBI" id="CHEBI:18420"/>
    </ligand>
</feature>
<feature type="binding site" evidence="1">
    <location>
        <position position="227"/>
    </location>
    <ligand>
        <name>UDP-N-acetyl-alpha-D-glucosamine</name>
        <dbReference type="ChEBI" id="CHEBI:57705"/>
    </ligand>
</feature>
<feature type="binding site" evidence="1">
    <location>
        <position position="332"/>
    </location>
    <ligand>
        <name>UDP-N-acetyl-alpha-D-glucosamine</name>
        <dbReference type="ChEBI" id="CHEBI:57705"/>
    </ligand>
</feature>
<feature type="binding site" evidence="1">
    <location>
        <position position="350"/>
    </location>
    <ligand>
        <name>UDP-N-acetyl-alpha-D-glucosamine</name>
        <dbReference type="ChEBI" id="CHEBI:57705"/>
    </ligand>
</feature>
<feature type="binding site" evidence="1">
    <location>
        <position position="365"/>
    </location>
    <ligand>
        <name>UDP-N-acetyl-alpha-D-glucosamine</name>
        <dbReference type="ChEBI" id="CHEBI:57705"/>
    </ligand>
</feature>
<feature type="binding site" evidence="1">
    <location>
        <position position="376"/>
    </location>
    <ligand>
        <name>UDP-N-acetyl-alpha-D-glucosamine</name>
        <dbReference type="ChEBI" id="CHEBI:57705"/>
    </ligand>
</feature>
<feature type="binding site" evidence="1">
    <location>
        <position position="379"/>
    </location>
    <ligand>
        <name>acetyl-CoA</name>
        <dbReference type="ChEBI" id="CHEBI:57288"/>
    </ligand>
</feature>
<feature type="binding site" evidence="1">
    <location>
        <begin position="385"/>
        <end position="386"/>
    </location>
    <ligand>
        <name>acetyl-CoA</name>
        <dbReference type="ChEBI" id="CHEBI:57288"/>
    </ligand>
</feature>
<feature type="binding site" evidence="1">
    <location>
        <position position="404"/>
    </location>
    <ligand>
        <name>acetyl-CoA</name>
        <dbReference type="ChEBI" id="CHEBI:57288"/>
    </ligand>
</feature>
<feature type="binding site" evidence="1">
    <location>
        <position position="422"/>
    </location>
    <ligand>
        <name>acetyl-CoA</name>
        <dbReference type="ChEBI" id="CHEBI:57288"/>
    </ligand>
</feature>
<feature type="binding site" evidence="1">
    <location>
        <position position="439"/>
    </location>
    <ligand>
        <name>acetyl-CoA</name>
        <dbReference type="ChEBI" id="CHEBI:57288"/>
    </ligand>
</feature>
<dbReference type="EC" id="2.7.7.23" evidence="1"/>
<dbReference type="EC" id="2.3.1.157" evidence="1"/>
<dbReference type="EMBL" id="CP000259">
    <property type="protein sequence ID" value="ABF31553.1"/>
    <property type="molecule type" value="Genomic_DNA"/>
</dbReference>
<dbReference type="RefSeq" id="WP_002990832.1">
    <property type="nucleotide sequence ID" value="NC_008021.1"/>
</dbReference>
<dbReference type="SMR" id="Q1JN46"/>
<dbReference type="KEGG" id="spk:MGAS9429_Spy0365"/>
<dbReference type="HOGENOM" id="CLU_029499_15_2_9"/>
<dbReference type="UniPathway" id="UPA00113">
    <property type="reaction ID" value="UER00532"/>
</dbReference>
<dbReference type="UniPathway" id="UPA00113">
    <property type="reaction ID" value="UER00533"/>
</dbReference>
<dbReference type="UniPathway" id="UPA00973"/>
<dbReference type="Proteomes" id="UP000002433">
    <property type="component" value="Chromosome"/>
</dbReference>
<dbReference type="GO" id="GO:0005737">
    <property type="term" value="C:cytoplasm"/>
    <property type="evidence" value="ECO:0007669"/>
    <property type="project" value="UniProtKB-SubCell"/>
</dbReference>
<dbReference type="GO" id="GO:0016020">
    <property type="term" value="C:membrane"/>
    <property type="evidence" value="ECO:0007669"/>
    <property type="project" value="GOC"/>
</dbReference>
<dbReference type="GO" id="GO:0019134">
    <property type="term" value="F:glucosamine-1-phosphate N-acetyltransferase activity"/>
    <property type="evidence" value="ECO:0007669"/>
    <property type="project" value="UniProtKB-UniRule"/>
</dbReference>
<dbReference type="GO" id="GO:0000287">
    <property type="term" value="F:magnesium ion binding"/>
    <property type="evidence" value="ECO:0007669"/>
    <property type="project" value="UniProtKB-UniRule"/>
</dbReference>
<dbReference type="GO" id="GO:0003977">
    <property type="term" value="F:UDP-N-acetylglucosamine diphosphorylase activity"/>
    <property type="evidence" value="ECO:0007669"/>
    <property type="project" value="UniProtKB-UniRule"/>
</dbReference>
<dbReference type="GO" id="GO:0000902">
    <property type="term" value="P:cell morphogenesis"/>
    <property type="evidence" value="ECO:0007669"/>
    <property type="project" value="UniProtKB-UniRule"/>
</dbReference>
<dbReference type="GO" id="GO:0071555">
    <property type="term" value="P:cell wall organization"/>
    <property type="evidence" value="ECO:0007669"/>
    <property type="project" value="UniProtKB-KW"/>
</dbReference>
<dbReference type="GO" id="GO:0009245">
    <property type="term" value="P:lipid A biosynthetic process"/>
    <property type="evidence" value="ECO:0007669"/>
    <property type="project" value="UniProtKB-UniRule"/>
</dbReference>
<dbReference type="GO" id="GO:0009252">
    <property type="term" value="P:peptidoglycan biosynthetic process"/>
    <property type="evidence" value="ECO:0007669"/>
    <property type="project" value="UniProtKB-UniRule"/>
</dbReference>
<dbReference type="GO" id="GO:0008360">
    <property type="term" value="P:regulation of cell shape"/>
    <property type="evidence" value="ECO:0007669"/>
    <property type="project" value="UniProtKB-KW"/>
</dbReference>
<dbReference type="GO" id="GO:0006048">
    <property type="term" value="P:UDP-N-acetylglucosamine biosynthetic process"/>
    <property type="evidence" value="ECO:0007669"/>
    <property type="project" value="UniProtKB-UniPathway"/>
</dbReference>
<dbReference type="CDD" id="cd02540">
    <property type="entry name" value="GT2_GlmU_N_bac"/>
    <property type="match status" value="1"/>
</dbReference>
<dbReference type="CDD" id="cd03353">
    <property type="entry name" value="LbH_GlmU_C"/>
    <property type="match status" value="1"/>
</dbReference>
<dbReference type="Gene3D" id="2.160.10.10">
    <property type="entry name" value="Hexapeptide repeat proteins"/>
    <property type="match status" value="1"/>
</dbReference>
<dbReference type="Gene3D" id="3.90.550.10">
    <property type="entry name" value="Spore Coat Polysaccharide Biosynthesis Protein SpsA, Chain A"/>
    <property type="match status" value="1"/>
</dbReference>
<dbReference type="HAMAP" id="MF_01631">
    <property type="entry name" value="GlmU"/>
    <property type="match status" value="1"/>
</dbReference>
<dbReference type="InterPro" id="IPR005882">
    <property type="entry name" value="Bifunctional_GlmU"/>
</dbReference>
<dbReference type="InterPro" id="IPR050065">
    <property type="entry name" value="GlmU-like"/>
</dbReference>
<dbReference type="InterPro" id="IPR038009">
    <property type="entry name" value="GlmU_C_LbH"/>
</dbReference>
<dbReference type="InterPro" id="IPR001451">
    <property type="entry name" value="Hexapep"/>
</dbReference>
<dbReference type="InterPro" id="IPR005835">
    <property type="entry name" value="NTP_transferase_dom"/>
</dbReference>
<dbReference type="InterPro" id="IPR029044">
    <property type="entry name" value="Nucleotide-diphossugar_trans"/>
</dbReference>
<dbReference type="InterPro" id="IPR011004">
    <property type="entry name" value="Trimer_LpxA-like_sf"/>
</dbReference>
<dbReference type="NCBIfam" id="TIGR01173">
    <property type="entry name" value="glmU"/>
    <property type="match status" value="1"/>
</dbReference>
<dbReference type="NCBIfam" id="NF010934">
    <property type="entry name" value="PRK14354.1"/>
    <property type="match status" value="1"/>
</dbReference>
<dbReference type="PANTHER" id="PTHR43584:SF3">
    <property type="entry name" value="BIFUNCTIONAL PROTEIN GLMU"/>
    <property type="match status" value="1"/>
</dbReference>
<dbReference type="PANTHER" id="PTHR43584">
    <property type="entry name" value="NUCLEOTIDYL TRANSFERASE"/>
    <property type="match status" value="1"/>
</dbReference>
<dbReference type="Pfam" id="PF00132">
    <property type="entry name" value="Hexapep"/>
    <property type="match status" value="2"/>
</dbReference>
<dbReference type="Pfam" id="PF00483">
    <property type="entry name" value="NTP_transferase"/>
    <property type="match status" value="1"/>
</dbReference>
<dbReference type="SUPFAM" id="SSF53448">
    <property type="entry name" value="Nucleotide-diphospho-sugar transferases"/>
    <property type="match status" value="1"/>
</dbReference>
<dbReference type="SUPFAM" id="SSF51161">
    <property type="entry name" value="Trimeric LpxA-like enzymes"/>
    <property type="match status" value="1"/>
</dbReference>